<accession>Q3E731</accession>
<accession>D6VXY5</accession>
<organism>
    <name type="scientific">Saccharomyces cerevisiae (strain ATCC 204508 / S288c)</name>
    <name type="common">Baker's yeast</name>
    <dbReference type="NCBI Taxonomy" id="559292"/>
    <lineage>
        <taxon>Eukaryota</taxon>
        <taxon>Fungi</taxon>
        <taxon>Dikarya</taxon>
        <taxon>Ascomycota</taxon>
        <taxon>Saccharomycotina</taxon>
        <taxon>Saccharomycetes</taxon>
        <taxon>Saccharomycetales</taxon>
        <taxon>Saccharomycetaceae</taxon>
        <taxon>Saccharomyces</taxon>
    </lineage>
</organism>
<dbReference type="EMBL" id="Z73125">
    <property type="status" value="NOT_ANNOTATED_CDS"/>
    <property type="molecule type" value="Genomic_DNA"/>
</dbReference>
<dbReference type="EMBL" id="BK006945">
    <property type="protein sequence ID" value="DAA09301.1"/>
    <property type="molecule type" value="Genomic_DNA"/>
</dbReference>
<dbReference type="RefSeq" id="NP_013082.1">
    <property type="nucleotide sequence ID" value="NM_001184338.1"/>
</dbReference>
<dbReference type="SMR" id="Q3E731"/>
<dbReference type="BioGRID" id="31234">
    <property type="interactions" value="45"/>
</dbReference>
<dbReference type="FunCoup" id="Q3E731">
    <property type="interactions" value="401"/>
</dbReference>
<dbReference type="STRING" id="4932.YLL018C-A"/>
<dbReference type="GlyGen" id="Q3E731">
    <property type="glycosylation" value="1 site"/>
</dbReference>
<dbReference type="PaxDb" id="4932-YLL018C-A"/>
<dbReference type="PeptideAtlas" id="Q3E731"/>
<dbReference type="EnsemblFungi" id="YLL018C-A_mRNA">
    <property type="protein sequence ID" value="YLL018C-A"/>
    <property type="gene ID" value="YLL018C-A"/>
</dbReference>
<dbReference type="GeneID" id="850642"/>
<dbReference type="KEGG" id="sce:YLL018C-A"/>
<dbReference type="AGR" id="SGD:S000007245"/>
<dbReference type="SGD" id="S000007245">
    <property type="gene designation" value="COX19"/>
</dbReference>
<dbReference type="VEuPathDB" id="FungiDB:YLL018C-A"/>
<dbReference type="eggNOG" id="KOG3477">
    <property type="taxonomic scope" value="Eukaryota"/>
</dbReference>
<dbReference type="GeneTree" id="ENSGT00390000016895"/>
<dbReference type="HOGENOM" id="CLU_141947_3_1_1"/>
<dbReference type="InParanoid" id="Q3E731"/>
<dbReference type="OMA" id="GTNDEAC"/>
<dbReference type="OrthoDB" id="268594at2759"/>
<dbReference type="BioCyc" id="YEAST:G3O-32559-MONOMER"/>
<dbReference type="BioGRID-ORCS" id="850642">
    <property type="hits" value="10 hits in 10 CRISPR screens"/>
</dbReference>
<dbReference type="PRO" id="PR:Q3E731"/>
<dbReference type="Proteomes" id="UP000002311">
    <property type="component" value="Chromosome XII"/>
</dbReference>
<dbReference type="RNAct" id="Q3E731">
    <property type="molecule type" value="protein"/>
</dbReference>
<dbReference type="GO" id="GO:0005829">
    <property type="term" value="C:cytosol"/>
    <property type="evidence" value="ECO:0000314"/>
    <property type="project" value="SGD"/>
</dbReference>
<dbReference type="GO" id="GO:0005758">
    <property type="term" value="C:mitochondrial intermembrane space"/>
    <property type="evidence" value="ECO:0000314"/>
    <property type="project" value="SGD"/>
</dbReference>
<dbReference type="GO" id="GO:0005507">
    <property type="term" value="F:copper ion binding"/>
    <property type="evidence" value="ECO:0000314"/>
    <property type="project" value="SGD"/>
</dbReference>
<dbReference type="GO" id="GO:0030001">
    <property type="term" value="P:metal ion transport"/>
    <property type="evidence" value="ECO:0000314"/>
    <property type="project" value="SGD"/>
</dbReference>
<dbReference type="GO" id="GO:0033617">
    <property type="term" value="P:mitochondrial cytochrome c oxidase assembly"/>
    <property type="evidence" value="ECO:0000314"/>
    <property type="project" value="SGD"/>
</dbReference>
<dbReference type="InterPro" id="IPR051383">
    <property type="entry name" value="COX19"/>
</dbReference>
<dbReference type="PANTHER" id="PTHR21107">
    <property type="entry name" value="CYTOCHROME C OXIDASE ASSEMBLY PROTEIN COX19"/>
    <property type="match status" value="1"/>
</dbReference>
<dbReference type="PANTHER" id="PTHR21107:SF2">
    <property type="entry name" value="CYTOCHROME C OXIDASE ASSEMBLY PROTEIN COX19"/>
    <property type="match status" value="1"/>
</dbReference>
<dbReference type="PROSITE" id="PS51808">
    <property type="entry name" value="CHCH"/>
    <property type="match status" value="1"/>
</dbReference>
<proteinExistence type="evidence at protein level"/>
<comment type="function">
    <text evidence="3">Required for the assembly of mitochondrial cytochrome c oxidase.</text>
</comment>
<comment type="subcellular location">
    <subcellularLocation>
        <location>Cytoplasm</location>
    </subcellularLocation>
    <subcellularLocation>
        <location evidence="5">Mitochondrion intermembrane space</location>
    </subcellularLocation>
</comment>
<comment type="miscellaneous">
    <text evidence="4">Present with 5750 molecules/cell in log phase SD medium.</text>
</comment>
<comment type="similarity">
    <text evidence="6">Belongs to the COX19 family.</text>
</comment>
<sequence length="98" mass="11105">MSGNPGSSLSALRPTPPERGSFPLDHDGECTKYMQEYLKCMQLVQNENAMNCRLLAKDYLRCRMDHQLMDYDEWSHLGLPEDAPGNNGKTIKDATDNK</sequence>
<gene>
    <name type="primary">COX19</name>
    <name type="ordered locus">YLL018C-A</name>
</gene>
<protein>
    <recommendedName>
        <fullName>Cytochrome c oxidase assembly protein COX19</fullName>
    </recommendedName>
</protein>
<evidence type="ECO:0000255" key="1">
    <source>
        <dbReference type="PROSITE-ProRule" id="PRU01150"/>
    </source>
</evidence>
<evidence type="ECO:0000256" key="2">
    <source>
        <dbReference type="SAM" id="MobiDB-lite"/>
    </source>
</evidence>
<evidence type="ECO:0000269" key="3">
    <source>
    </source>
</evidence>
<evidence type="ECO:0000269" key="4">
    <source>
    </source>
</evidence>
<evidence type="ECO:0000269" key="5">
    <source>
    </source>
</evidence>
<evidence type="ECO:0000305" key="6"/>
<reference key="1">
    <citation type="journal article" date="1997" name="Nature">
        <title>The nucleotide sequence of Saccharomyces cerevisiae chromosome XII.</title>
        <authorList>
            <person name="Johnston M."/>
            <person name="Hillier L.W."/>
            <person name="Riles L."/>
            <person name="Albermann K."/>
            <person name="Andre B."/>
            <person name="Ansorge W."/>
            <person name="Benes V."/>
            <person name="Brueckner M."/>
            <person name="Delius H."/>
            <person name="Dubois E."/>
            <person name="Duesterhoeft A."/>
            <person name="Entian K.-D."/>
            <person name="Floeth M."/>
            <person name="Goffeau A."/>
            <person name="Hebling U."/>
            <person name="Heumann K."/>
            <person name="Heuss-Neitzel D."/>
            <person name="Hilbert H."/>
            <person name="Hilger F."/>
            <person name="Kleine K."/>
            <person name="Koetter P."/>
            <person name="Louis E.J."/>
            <person name="Messenguy F."/>
            <person name="Mewes H.-W."/>
            <person name="Miosga T."/>
            <person name="Moestl D."/>
            <person name="Mueller-Auer S."/>
            <person name="Nentwich U."/>
            <person name="Obermaier B."/>
            <person name="Piravandi E."/>
            <person name="Pohl T.M."/>
            <person name="Portetelle D."/>
            <person name="Purnelle B."/>
            <person name="Rechmann S."/>
            <person name="Rieger M."/>
            <person name="Rinke M."/>
            <person name="Rose M."/>
            <person name="Scharfe M."/>
            <person name="Scherens B."/>
            <person name="Scholler P."/>
            <person name="Schwager C."/>
            <person name="Schwarz S."/>
            <person name="Underwood A.P."/>
            <person name="Urrestarazu L.A."/>
            <person name="Vandenbol M."/>
            <person name="Verhasselt P."/>
            <person name="Vierendeels F."/>
            <person name="Voet M."/>
            <person name="Volckaert G."/>
            <person name="Voss H."/>
            <person name="Wambutt R."/>
            <person name="Wedler E."/>
            <person name="Wedler H."/>
            <person name="Zimmermann F.K."/>
            <person name="Zollner A."/>
            <person name="Hani J."/>
            <person name="Hoheisel J.D."/>
        </authorList>
    </citation>
    <scope>NUCLEOTIDE SEQUENCE [LARGE SCALE GENOMIC DNA]</scope>
    <source>
        <strain>ATCC 204508 / S288c</strain>
    </source>
</reference>
<reference key="2">
    <citation type="journal article" date="2014" name="G3 (Bethesda)">
        <title>The reference genome sequence of Saccharomyces cerevisiae: Then and now.</title>
        <authorList>
            <person name="Engel S.R."/>
            <person name="Dietrich F.S."/>
            <person name="Fisk D.G."/>
            <person name="Binkley G."/>
            <person name="Balakrishnan R."/>
            <person name="Costanzo M.C."/>
            <person name="Dwight S.S."/>
            <person name="Hitz B.C."/>
            <person name="Karra K."/>
            <person name="Nash R.S."/>
            <person name="Weng S."/>
            <person name="Wong E.D."/>
            <person name="Lloyd P."/>
            <person name="Skrzypek M.S."/>
            <person name="Miyasato S.R."/>
            <person name="Simison M."/>
            <person name="Cherry J.M."/>
        </authorList>
    </citation>
    <scope>GENOME REANNOTATION</scope>
    <source>
        <strain>ATCC 204508 / S288c</strain>
    </source>
</reference>
<reference key="3">
    <citation type="journal article" date="2002" name="J. Biol. Chem.">
        <title>Characterization of COX19, a widely distributed gene required for expression of mitochondrial cytochrome oxidase.</title>
        <authorList>
            <person name="Nobrega M.P."/>
            <person name="Bandeira S.C.B."/>
            <person name="Beers J."/>
            <person name="Tzagoloff A."/>
        </authorList>
    </citation>
    <scope>FUNCTION</scope>
    <scope>MUTAGENESIS OF ARG-63</scope>
    <scope>SUBCELLULAR LOCATION</scope>
</reference>
<reference key="4">
    <citation type="journal article" date="2003" name="Nature">
        <title>Global analysis of protein localization in budding yeast.</title>
        <authorList>
            <person name="Huh W.-K."/>
            <person name="Falvo J.V."/>
            <person name="Gerke L.C."/>
            <person name="Carroll A.S."/>
            <person name="Howson R.W."/>
            <person name="Weissman J.S."/>
            <person name="O'Shea E.K."/>
        </authorList>
    </citation>
    <scope>SUBCELLULAR LOCATION [LARGE SCALE ANALYSIS]</scope>
</reference>
<reference key="5">
    <citation type="journal article" date="2003" name="Nature">
        <title>Global analysis of protein expression in yeast.</title>
        <authorList>
            <person name="Ghaemmaghami S."/>
            <person name="Huh W.-K."/>
            <person name="Bower K."/>
            <person name="Howson R.W."/>
            <person name="Belle A."/>
            <person name="Dephoure N."/>
            <person name="O'Shea E.K."/>
            <person name="Weissman J.S."/>
        </authorList>
    </citation>
    <scope>LEVEL OF PROTEIN EXPRESSION [LARGE SCALE ANALYSIS]</scope>
</reference>
<reference key="6">
    <citation type="journal article" date="2012" name="Mol. Cell. Proteomics">
        <title>Intermembrane space proteome of yeast mitochondria.</title>
        <authorList>
            <person name="Voegtle F.N."/>
            <person name="Burkhart J.M."/>
            <person name="Rao S."/>
            <person name="Gerbeth C."/>
            <person name="Hinrichs J."/>
            <person name="Martinou J.C."/>
            <person name="Chacinska A."/>
            <person name="Sickmann A."/>
            <person name="Zahedi R.P."/>
            <person name="Meisinger C."/>
        </authorList>
    </citation>
    <scope>IDENTIFICATION BY MASS SPECTROMETRY</scope>
    <scope>SUBCELLULAR LOCATION [LARGE SCALE ANALYSIS]</scope>
</reference>
<feature type="chain" id="PRO_0000122292" description="Cytochrome c oxidase assembly protein COX19">
    <location>
        <begin position="1"/>
        <end position="98"/>
    </location>
</feature>
<feature type="domain" description="CHCH" evidence="1">
    <location>
        <begin position="27"/>
        <end position="70"/>
    </location>
</feature>
<feature type="region of interest" description="Disordered" evidence="2">
    <location>
        <begin position="1"/>
        <end position="25"/>
    </location>
</feature>
<feature type="region of interest" description="Disordered" evidence="2">
    <location>
        <begin position="76"/>
        <end position="98"/>
    </location>
</feature>
<feature type="short sequence motif" description="Cx9C motif 1" evidence="1">
    <location>
        <begin position="30"/>
        <end position="40"/>
    </location>
</feature>
<feature type="short sequence motif" description="Cx9C motif 2" evidence="1">
    <location>
        <begin position="52"/>
        <end position="62"/>
    </location>
</feature>
<feature type="compositionally biased region" description="Polar residues" evidence="2">
    <location>
        <begin position="1"/>
        <end position="10"/>
    </location>
</feature>
<feature type="disulfide bond" evidence="1">
    <location>
        <begin position="30"/>
        <end position="62"/>
    </location>
</feature>
<feature type="disulfide bond" evidence="1">
    <location>
        <begin position="40"/>
        <end position="52"/>
    </location>
</feature>
<feature type="mutagenesis site" description="In COX19-1; causes a respiratory-deficient phenotype because of lack of cytochrome c activity." evidence="3">
    <original>R</original>
    <variation>T</variation>
    <location>
        <position position="63"/>
    </location>
</feature>
<name>COX19_YEAST</name>
<keyword id="KW-0963">Cytoplasm</keyword>
<keyword id="KW-1015">Disulfide bond</keyword>
<keyword id="KW-0496">Mitochondrion</keyword>
<keyword id="KW-1185">Reference proteome</keyword>